<gene>
    <name evidence="1" type="primary">rsmJ</name>
    <name type="ordered locus">ACICU_00645</name>
</gene>
<comment type="function">
    <text evidence="1">Specifically methylates the guanosine in position 1516 of 16S rRNA.</text>
</comment>
<comment type="catalytic activity">
    <reaction evidence="1">
        <text>guanosine(1516) in 16S rRNA + S-adenosyl-L-methionine = N(2)-methylguanosine(1516) in 16S rRNA + S-adenosyl-L-homocysteine + H(+)</text>
        <dbReference type="Rhea" id="RHEA:43220"/>
        <dbReference type="Rhea" id="RHEA-COMP:10412"/>
        <dbReference type="Rhea" id="RHEA-COMP:10413"/>
        <dbReference type="ChEBI" id="CHEBI:15378"/>
        <dbReference type="ChEBI" id="CHEBI:57856"/>
        <dbReference type="ChEBI" id="CHEBI:59789"/>
        <dbReference type="ChEBI" id="CHEBI:74269"/>
        <dbReference type="ChEBI" id="CHEBI:74481"/>
        <dbReference type="EC" id="2.1.1.242"/>
    </reaction>
</comment>
<comment type="subcellular location">
    <subcellularLocation>
        <location evidence="1">Cytoplasm</location>
    </subcellularLocation>
</comment>
<comment type="similarity">
    <text evidence="1">Belongs to the methyltransferase superfamily. RsmJ family.</text>
</comment>
<comment type="sequence caution" evidence="2">
    <conflict type="erroneous initiation">
        <sequence resource="EMBL-CDS" id="ACC55957"/>
    </conflict>
    <text>Truncated N-terminus.</text>
</comment>
<proteinExistence type="inferred from homology"/>
<protein>
    <recommendedName>
        <fullName evidence="1">Ribosomal RNA small subunit methyltransferase J</fullName>
        <ecNumber evidence="1">2.1.1.242</ecNumber>
    </recommendedName>
    <alternativeName>
        <fullName evidence="1">16S rRNA m2G1516 methyltransferase</fullName>
    </alternativeName>
    <alternativeName>
        <fullName evidence="1">rRNA (guanine-N(2)-)-methyltransferase</fullName>
    </alternativeName>
</protein>
<name>RSMJ_ACIBC</name>
<reference key="1">
    <citation type="journal article" date="2008" name="Antimicrob. Agents Chemother.">
        <title>Whole-genome pyrosequencing of an epidemic multidrug-resistant Acinetobacter baumannii strain belonging to the European clone II group.</title>
        <authorList>
            <person name="Iacono M."/>
            <person name="Villa L."/>
            <person name="Fortini D."/>
            <person name="Bordoni R."/>
            <person name="Imperi F."/>
            <person name="Bonnal R.J."/>
            <person name="Sicheritz-Ponten T."/>
            <person name="De Bellis G."/>
            <person name="Visca P."/>
            <person name="Cassone A."/>
            <person name="Carattoli A."/>
        </authorList>
    </citation>
    <scope>NUCLEOTIDE SEQUENCE [LARGE SCALE GENOMIC DNA]</scope>
    <source>
        <strain>ACICU</strain>
    </source>
</reference>
<evidence type="ECO:0000255" key="1">
    <source>
        <dbReference type="HAMAP-Rule" id="MF_01523"/>
    </source>
</evidence>
<evidence type="ECO:0000305" key="2"/>
<organism>
    <name type="scientific">Acinetobacter baumannii (strain ACICU)</name>
    <dbReference type="NCBI Taxonomy" id="405416"/>
    <lineage>
        <taxon>Bacteria</taxon>
        <taxon>Pseudomonadati</taxon>
        <taxon>Pseudomonadota</taxon>
        <taxon>Gammaproteobacteria</taxon>
        <taxon>Moraxellales</taxon>
        <taxon>Moraxellaceae</taxon>
        <taxon>Acinetobacter</taxon>
        <taxon>Acinetobacter calcoaceticus/baumannii complex</taxon>
    </lineage>
</organism>
<dbReference type="EC" id="2.1.1.242" evidence="1"/>
<dbReference type="EMBL" id="CP000863">
    <property type="protein sequence ID" value="ACC55957.1"/>
    <property type="status" value="ALT_INIT"/>
    <property type="molecule type" value="Genomic_DNA"/>
</dbReference>
<dbReference type="SMR" id="B2HTX7"/>
<dbReference type="KEGG" id="abc:ACICU_00645"/>
<dbReference type="HOGENOM" id="CLU_076324_1_0_6"/>
<dbReference type="Proteomes" id="UP000008839">
    <property type="component" value="Chromosome"/>
</dbReference>
<dbReference type="GO" id="GO:0005737">
    <property type="term" value="C:cytoplasm"/>
    <property type="evidence" value="ECO:0007669"/>
    <property type="project" value="UniProtKB-SubCell"/>
</dbReference>
<dbReference type="GO" id="GO:0008990">
    <property type="term" value="F:rRNA (guanine-N2-)-methyltransferase activity"/>
    <property type="evidence" value="ECO:0007669"/>
    <property type="project" value="UniProtKB-UniRule"/>
</dbReference>
<dbReference type="CDD" id="cd02440">
    <property type="entry name" value="AdoMet_MTases"/>
    <property type="match status" value="1"/>
</dbReference>
<dbReference type="Gene3D" id="3.40.50.150">
    <property type="entry name" value="Vaccinia Virus protein VP39"/>
    <property type="match status" value="1"/>
</dbReference>
<dbReference type="HAMAP" id="MF_01523">
    <property type="entry name" value="16SrRNA_methyltr_J"/>
    <property type="match status" value="1"/>
</dbReference>
<dbReference type="InterPro" id="IPR007536">
    <property type="entry name" value="16SrRNA_methylTrfase_J"/>
</dbReference>
<dbReference type="InterPro" id="IPR029063">
    <property type="entry name" value="SAM-dependent_MTases_sf"/>
</dbReference>
<dbReference type="PANTHER" id="PTHR36112">
    <property type="entry name" value="RIBOSOMAL RNA SMALL SUBUNIT METHYLTRANSFERASE J"/>
    <property type="match status" value="1"/>
</dbReference>
<dbReference type="PANTHER" id="PTHR36112:SF1">
    <property type="entry name" value="RIBOSOMAL RNA SMALL SUBUNIT METHYLTRANSFERASE J"/>
    <property type="match status" value="1"/>
</dbReference>
<dbReference type="Pfam" id="PF04445">
    <property type="entry name" value="SAM_MT"/>
    <property type="match status" value="1"/>
</dbReference>
<dbReference type="SUPFAM" id="SSF53335">
    <property type="entry name" value="S-adenosyl-L-methionine-dependent methyltransferases"/>
    <property type="match status" value="1"/>
</dbReference>
<feature type="chain" id="PRO_0000383368" description="Ribosomal RNA small subunit methyltransferase J">
    <location>
        <begin position="1"/>
        <end position="279"/>
    </location>
</feature>
<feature type="binding site" evidence="1">
    <location>
        <begin position="138"/>
        <end position="139"/>
    </location>
    <ligand>
        <name>S-adenosyl-L-methionine</name>
        <dbReference type="ChEBI" id="CHEBI:59789"/>
    </ligand>
</feature>
<feature type="binding site" evidence="1">
    <location>
        <position position="194"/>
    </location>
    <ligand>
        <name>S-adenosyl-L-methionine</name>
        <dbReference type="ChEBI" id="CHEBI:59789"/>
    </ligand>
</feature>
<sequence length="279" mass="31980">MEKNCGSGQNKLKALRMHIYFEVDFQEQAQHYQAVLYSRGVTVDLQPIEKLNARFLRLNPDLALCVDENGLWLSANGMKMQPDWKAEIPRLKRASLKSEMIARACQLGEKPVLVDATAGLGHDSLLMAYLGAQIQLVERHPILFTLLEDSKAQAQRDPFLSQFMDRIQLLFADSASYLQQLDQEAKTVDVVYLDPMFPQRDQNQQAIKKQAQVKKQMQLLHLLLPEDGEMDLGDHLLELAKKVVKRVIVKRPRHAIFLANQEPAHQWQGDACRFDAYFQ</sequence>
<keyword id="KW-0963">Cytoplasm</keyword>
<keyword id="KW-0489">Methyltransferase</keyword>
<keyword id="KW-0698">rRNA processing</keyword>
<keyword id="KW-0949">S-adenosyl-L-methionine</keyword>
<keyword id="KW-0808">Transferase</keyword>
<accession>B2HTX7</accession>